<proteinExistence type="inferred from homology"/>
<accession>C5B835</accession>
<reference key="1">
    <citation type="submission" date="2009-03" db="EMBL/GenBank/DDBJ databases">
        <title>Complete genome sequence of Edwardsiella ictaluri 93-146.</title>
        <authorList>
            <person name="Williams M.L."/>
            <person name="Gillaspy A.F."/>
            <person name="Dyer D.W."/>
            <person name="Thune R.L."/>
            <person name="Waldbieser G.C."/>
            <person name="Schuster S.C."/>
            <person name="Gipson J."/>
            <person name="Zaitshik J."/>
            <person name="Landry C."/>
            <person name="Lawrence M.L."/>
        </authorList>
    </citation>
    <scope>NUCLEOTIDE SEQUENCE [LARGE SCALE GENOMIC DNA]</scope>
    <source>
        <strain>93-146</strain>
    </source>
</reference>
<gene>
    <name evidence="1" type="primary">cutC</name>
    <name type="ordered locus">NT01EI_1587</name>
</gene>
<dbReference type="EMBL" id="CP001600">
    <property type="protein sequence ID" value="ACR68771.1"/>
    <property type="molecule type" value="Genomic_DNA"/>
</dbReference>
<dbReference type="RefSeq" id="WP_015870929.1">
    <property type="nucleotide sequence ID" value="NZ_CP169062.1"/>
</dbReference>
<dbReference type="SMR" id="C5B835"/>
<dbReference type="STRING" id="67780.B6E78_01125"/>
<dbReference type="GeneID" id="69538564"/>
<dbReference type="KEGG" id="eic:NT01EI_1587"/>
<dbReference type="PATRIC" id="fig|634503.3.peg.1419"/>
<dbReference type="HOGENOM" id="CLU_050555_3_1_6"/>
<dbReference type="OrthoDB" id="9815677at2"/>
<dbReference type="Proteomes" id="UP000001485">
    <property type="component" value="Chromosome"/>
</dbReference>
<dbReference type="GO" id="GO:0005737">
    <property type="term" value="C:cytoplasm"/>
    <property type="evidence" value="ECO:0007669"/>
    <property type="project" value="UniProtKB-SubCell"/>
</dbReference>
<dbReference type="GO" id="GO:0005507">
    <property type="term" value="F:copper ion binding"/>
    <property type="evidence" value="ECO:0007669"/>
    <property type="project" value="TreeGrafter"/>
</dbReference>
<dbReference type="FunFam" id="3.20.20.380:FF:000001">
    <property type="entry name" value="Copper homeostasis protein CutC"/>
    <property type="match status" value="1"/>
</dbReference>
<dbReference type="Gene3D" id="3.20.20.380">
    <property type="entry name" value="Copper homeostasis (CutC) domain"/>
    <property type="match status" value="1"/>
</dbReference>
<dbReference type="HAMAP" id="MF_00795">
    <property type="entry name" value="CutC"/>
    <property type="match status" value="1"/>
</dbReference>
<dbReference type="InterPro" id="IPR005627">
    <property type="entry name" value="CutC-like"/>
</dbReference>
<dbReference type="InterPro" id="IPR036822">
    <property type="entry name" value="CutC-like_dom_sf"/>
</dbReference>
<dbReference type="NCBIfam" id="NF008603">
    <property type="entry name" value="PRK11572.1"/>
    <property type="match status" value="1"/>
</dbReference>
<dbReference type="PANTHER" id="PTHR12598">
    <property type="entry name" value="COPPER HOMEOSTASIS PROTEIN CUTC"/>
    <property type="match status" value="1"/>
</dbReference>
<dbReference type="PANTHER" id="PTHR12598:SF0">
    <property type="entry name" value="COPPER HOMEOSTASIS PROTEIN CUTC HOMOLOG"/>
    <property type="match status" value="1"/>
</dbReference>
<dbReference type="Pfam" id="PF03932">
    <property type="entry name" value="CutC"/>
    <property type="match status" value="1"/>
</dbReference>
<dbReference type="SUPFAM" id="SSF110395">
    <property type="entry name" value="CutC-like"/>
    <property type="match status" value="1"/>
</dbReference>
<evidence type="ECO:0000255" key="1">
    <source>
        <dbReference type="HAMAP-Rule" id="MF_00795"/>
    </source>
</evidence>
<feature type="chain" id="PRO_1000212964" description="PF03932 family protein CutC">
    <location>
        <begin position="1"/>
        <end position="251"/>
    </location>
</feature>
<protein>
    <recommendedName>
        <fullName evidence="1">PF03932 family protein CutC</fullName>
    </recommendedName>
</protein>
<name>CUTC_EDWI9</name>
<organism>
    <name type="scientific">Edwardsiella ictaluri (strain 93-146)</name>
    <dbReference type="NCBI Taxonomy" id="634503"/>
    <lineage>
        <taxon>Bacteria</taxon>
        <taxon>Pseudomonadati</taxon>
        <taxon>Pseudomonadota</taxon>
        <taxon>Gammaproteobacteria</taxon>
        <taxon>Enterobacterales</taxon>
        <taxon>Hafniaceae</taxon>
        <taxon>Edwardsiella</taxon>
    </lineage>
</organism>
<keyword id="KW-0963">Cytoplasm</keyword>
<comment type="subcellular location">
    <subcellularLocation>
        <location evidence="1">Cytoplasm</location>
    </subcellularLocation>
</comment>
<comment type="similarity">
    <text evidence="1">Belongs to the CutC family.</text>
</comment>
<comment type="caution">
    <text evidence="1">Once thought to be involved in copper homeostasis, experiments in E.coli have shown this is not the case.</text>
</comment>
<sequence>MLTLEVCCYSLACAEIAQAAGADRIELCASQQDGGITPSYGTLVGCRERVSVPVHPIIRPRSGDFCYSDSEFALMKCDLALVRDLGFPGAVIGLLDEEGHIDLRRMGELMALAGPMAVTFHRAFDMCANPLQALSQLTDLGIARILTSGQQQTAEAGLPLLRQLQQASRGPLIMAGAGVRLSNLHKFSGIGLQEVHTSAGHCVPSTMRYRKAGVSMSHAENDEFSHYCVDGGMVEAMKSALQMMETVGCSI</sequence>